<sequence>MEGMDIDLDQELMQKFSCMGTTDKDVLVSEFQRLLGFQLNPAGCAFFLDMTNWNLQAAIGAYYDFESPNINTPSMSFVEDVTIGEGESVPPDTPFTKTWRIQNTGTESWPPGVCLKYVGGDQFGHVNMVMVRSLDPQEISDVSVQMRSPAVPGMYQGQWRMCTATGLFYGDVIWVILSVEEGGLLGVTQQLSSFKTEFNTQPHRSLEGDYNPFASPQKNKQDTNEDHLKDPGGPWEAPLDSIQQDQNGLNHSSVNITPNGLQNNLSVVTYSQGINGPFPFGQS</sequence>
<gene>
    <name type="primary">ilrun</name>
    <name type="ORF">zgc:101577</name>
</gene>
<keyword id="KW-0963">Cytoplasm</keyword>
<keyword id="KW-0391">Immunity</keyword>
<keyword id="KW-0399">Innate immunity</keyword>
<keyword id="KW-0539">Nucleus</keyword>
<keyword id="KW-1185">Reference proteome</keyword>
<proteinExistence type="evidence at transcript level"/>
<feature type="chain" id="PRO_0000223321" description="Protein ILRUN">
    <location>
        <begin position="1"/>
        <end position="283"/>
    </location>
</feature>
<feature type="region of interest" description="Disordered" evidence="2">
    <location>
        <begin position="198"/>
        <end position="254"/>
    </location>
</feature>
<feature type="compositionally biased region" description="Basic and acidic residues" evidence="2">
    <location>
        <begin position="219"/>
        <end position="230"/>
    </location>
</feature>
<feature type="compositionally biased region" description="Polar residues" evidence="2">
    <location>
        <begin position="241"/>
        <end position="254"/>
    </location>
</feature>
<comment type="function">
    <text evidence="1">May have a roles as negative regulator of innate antiviral response.</text>
</comment>
<comment type="subcellular location">
    <subcellularLocation>
        <location evidence="1">Cytoplasm</location>
    </subcellularLocation>
    <subcellularLocation>
        <location evidence="1">Nucleus</location>
    </subcellularLocation>
</comment>
<accession>Q5BL31</accession>
<dbReference type="EMBL" id="BC090819">
    <property type="protein sequence ID" value="AAH90819.1"/>
    <property type="molecule type" value="mRNA"/>
</dbReference>
<dbReference type="RefSeq" id="NP_001013560.1">
    <property type="nucleotide sequence ID" value="NM_001013542.1"/>
</dbReference>
<dbReference type="SMR" id="Q5BL31"/>
<dbReference type="FunCoup" id="Q5BL31">
    <property type="interactions" value="2504"/>
</dbReference>
<dbReference type="STRING" id="7955.ENSDARP00000129179"/>
<dbReference type="PaxDb" id="7955-ENSDARP00000099995"/>
<dbReference type="GeneID" id="541415"/>
<dbReference type="KEGG" id="dre:541415"/>
<dbReference type="AGR" id="ZFIN:ZDB-GENE-050320-117"/>
<dbReference type="CTD" id="64771"/>
<dbReference type="ZFIN" id="ZDB-GENE-050320-117">
    <property type="gene designation" value="ilrun"/>
</dbReference>
<dbReference type="eggNOG" id="KOG4351">
    <property type="taxonomic scope" value="Eukaryota"/>
</dbReference>
<dbReference type="InParanoid" id="Q5BL31"/>
<dbReference type="OrthoDB" id="661148at2759"/>
<dbReference type="PhylomeDB" id="Q5BL31"/>
<dbReference type="PRO" id="PR:Q5BL31"/>
<dbReference type="Proteomes" id="UP000000437">
    <property type="component" value="Chromosome 6"/>
</dbReference>
<dbReference type="GO" id="GO:0005634">
    <property type="term" value="C:nucleus"/>
    <property type="evidence" value="ECO:0007669"/>
    <property type="project" value="UniProtKB-SubCell"/>
</dbReference>
<dbReference type="GO" id="GO:0000407">
    <property type="term" value="C:phagophore assembly site"/>
    <property type="evidence" value="ECO:0000318"/>
    <property type="project" value="GO_Central"/>
</dbReference>
<dbReference type="GO" id="GO:0043130">
    <property type="term" value="F:ubiquitin binding"/>
    <property type="evidence" value="ECO:0000318"/>
    <property type="project" value="GO_Central"/>
</dbReference>
<dbReference type="GO" id="GO:0045087">
    <property type="term" value="P:innate immune response"/>
    <property type="evidence" value="ECO:0007669"/>
    <property type="project" value="UniProtKB-KW"/>
</dbReference>
<dbReference type="GO" id="GO:0016236">
    <property type="term" value="P:macroautophagy"/>
    <property type="evidence" value="ECO:0000318"/>
    <property type="project" value="GO_Central"/>
</dbReference>
<dbReference type="CDD" id="cd14947">
    <property type="entry name" value="NBR1_like"/>
    <property type="match status" value="1"/>
</dbReference>
<dbReference type="CDD" id="cd14349">
    <property type="entry name" value="UBA_CF106"/>
    <property type="match status" value="1"/>
</dbReference>
<dbReference type="FunFam" id="1.10.8.10:FF:000015">
    <property type="entry name" value="Chromosome 6 C6orf106 homolog"/>
    <property type="match status" value="1"/>
</dbReference>
<dbReference type="FunFam" id="2.60.40.10:FF:000289">
    <property type="entry name" value="Chromosome 6 open reading frame 106"/>
    <property type="match status" value="1"/>
</dbReference>
<dbReference type="Gene3D" id="1.10.8.10">
    <property type="entry name" value="DNA helicase RuvA subunit, C-terminal domain"/>
    <property type="match status" value="1"/>
</dbReference>
<dbReference type="Gene3D" id="2.60.40.10">
    <property type="entry name" value="Immunoglobulins"/>
    <property type="match status" value="1"/>
</dbReference>
<dbReference type="InterPro" id="IPR039517">
    <property type="entry name" value="C6orf106_UBA-like"/>
</dbReference>
<dbReference type="InterPro" id="IPR013783">
    <property type="entry name" value="Ig-like_fold"/>
</dbReference>
<dbReference type="InterPro" id="IPR032350">
    <property type="entry name" value="N_BRCA1_central"/>
</dbReference>
<dbReference type="InterPro" id="IPR009060">
    <property type="entry name" value="UBA-like_sf"/>
</dbReference>
<dbReference type="PANTHER" id="PTHR20930">
    <property type="entry name" value="OVARIAN CARCINOMA ANTIGEN CA125-RELATED"/>
    <property type="match status" value="1"/>
</dbReference>
<dbReference type="PANTHER" id="PTHR20930:SF0">
    <property type="entry name" value="PROTEIN ILRUN"/>
    <property type="match status" value="1"/>
</dbReference>
<dbReference type="Pfam" id="PF16158">
    <property type="entry name" value="N_BRCA1_IG"/>
    <property type="match status" value="1"/>
</dbReference>
<dbReference type="Pfam" id="PF14555">
    <property type="entry name" value="UBA_4"/>
    <property type="match status" value="1"/>
</dbReference>
<dbReference type="SUPFAM" id="SSF46934">
    <property type="entry name" value="UBA-like"/>
    <property type="match status" value="1"/>
</dbReference>
<protein>
    <recommendedName>
        <fullName evidence="3">Protein ILRUN</fullName>
    </recommendedName>
</protein>
<name>ILRUN_DANRE</name>
<reference key="1">
    <citation type="submission" date="2005-03" db="EMBL/GenBank/DDBJ databases">
        <authorList>
            <consortium name="NIH - Zebrafish Gene Collection (ZGC) project"/>
        </authorList>
    </citation>
    <scope>NUCLEOTIDE SEQUENCE [LARGE SCALE MRNA]</scope>
    <source>
        <tissue>Embryo</tissue>
    </source>
</reference>
<evidence type="ECO:0000250" key="1">
    <source>
        <dbReference type="UniProtKB" id="Q9H6K1"/>
    </source>
</evidence>
<evidence type="ECO:0000256" key="2">
    <source>
        <dbReference type="SAM" id="MobiDB-lite"/>
    </source>
</evidence>
<evidence type="ECO:0000305" key="3"/>
<organism>
    <name type="scientific">Danio rerio</name>
    <name type="common">Zebrafish</name>
    <name type="synonym">Brachydanio rerio</name>
    <dbReference type="NCBI Taxonomy" id="7955"/>
    <lineage>
        <taxon>Eukaryota</taxon>
        <taxon>Metazoa</taxon>
        <taxon>Chordata</taxon>
        <taxon>Craniata</taxon>
        <taxon>Vertebrata</taxon>
        <taxon>Euteleostomi</taxon>
        <taxon>Actinopterygii</taxon>
        <taxon>Neopterygii</taxon>
        <taxon>Teleostei</taxon>
        <taxon>Ostariophysi</taxon>
        <taxon>Cypriniformes</taxon>
        <taxon>Danionidae</taxon>
        <taxon>Danioninae</taxon>
        <taxon>Danio</taxon>
    </lineage>
</organism>